<organism>
    <name type="scientific">Pseudomonas fluorescens (strain ATCC BAA-477 / NRRL B-23932 / Pf-5)</name>
    <dbReference type="NCBI Taxonomy" id="220664"/>
    <lineage>
        <taxon>Bacteria</taxon>
        <taxon>Pseudomonadati</taxon>
        <taxon>Pseudomonadota</taxon>
        <taxon>Gammaproteobacteria</taxon>
        <taxon>Pseudomonadales</taxon>
        <taxon>Pseudomonadaceae</taxon>
        <taxon>Pseudomonas</taxon>
    </lineage>
</organism>
<comment type="function">
    <text evidence="1">NAD-binding protein involved in the addition of a carboxymethylaminomethyl (cmnm) group at the wobble position (U34) of certain tRNAs, forming tRNA-cmnm(5)s(2)U34.</text>
</comment>
<comment type="cofactor">
    <cofactor evidence="1">
        <name>FAD</name>
        <dbReference type="ChEBI" id="CHEBI:57692"/>
    </cofactor>
</comment>
<comment type="subunit">
    <text evidence="1">Homodimer. Heterotetramer of two MnmE and two MnmG subunits.</text>
</comment>
<comment type="subcellular location">
    <subcellularLocation>
        <location evidence="1">Cytoplasm</location>
    </subcellularLocation>
</comment>
<comment type="similarity">
    <text evidence="1">Belongs to the MnmG family.</text>
</comment>
<gene>
    <name evidence="1" type="primary">mnmG</name>
    <name evidence="1" type="synonym">gidA</name>
    <name type="ordered locus">PFL_6226</name>
</gene>
<sequence>MDFPSRFEVIVIGGGHAGTEAALASARMGAKTLLLTHNVETLGAMSCNPAIGGIGKSHLVKEIDALGGAMAMATDKGGIQFRVLNSRKGPAVRATRAQADRILYKAAVREILENQPNLWIFQQAADDLIVEQDQVRGVVTQMGLRFFAESVVLTTGTFLGGLIHIGMQNYSGGRAGDPPSIALAQRLRELPLRVGRLKTGTPPRIDGRSVDFSVMTEQPGDTPIPVMSFLGSKEQHPPQVSCWITHTNARTHEIIASNLDRSPMYSGVIEGIGPRYCPSIEDKIHRFADKESHQVFIEPEGLTTHELYPNGISTSLPFDVQLQIVQSIRGMENAHIVRPGYAIEYDYFDPRDLKYSLETKVIGGLFFAGQINGTTGYEEAGAQGLLAGANAALRAQGKDSWCPRRDEAYIGVLVDDLITLGTQEPYRMFTSRAEYRLILREDNADLRLTEKGRELGLVDDVRWAAFCKKREGIAQEEQRLKSTWVRPGTEQGDAIAQKFGTPLTHEYNLLNLLSRPEIDYAGLVEVTGQGAEDPQVAEQVEIKTKYAGYIDRQQDEIARLRASEDTKLPVDIDYSGISGLSKEIQSKLGATRPETLGQASRIPGVTPAAISLLMIHLKKRGAGRQLEQSA</sequence>
<name>MNMG_PSEF5</name>
<keyword id="KW-0963">Cytoplasm</keyword>
<keyword id="KW-0274">FAD</keyword>
<keyword id="KW-0285">Flavoprotein</keyword>
<keyword id="KW-0520">NAD</keyword>
<keyword id="KW-0819">tRNA processing</keyword>
<feature type="chain" id="PRO_0000117154" description="tRNA uridine 5-carboxymethylaminomethyl modification enzyme MnmG">
    <location>
        <begin position="1"/>
        <end position="630"/>
    </location>
</feature>
<feature type="binding site" evidence="1">
    <location>
        <begin position="13"/>
        <end position="18"/>
    </location>
    <ligand>
        <name>FAD</name>
        <dbReference type="ChEBI" id="CHEBI:57692"/>
    </ligand>
</feature>
<feature type="binding site" evidence="1">
    <location>
        <begin position="273"/>
        <end position="287"/>
    </location>
    <ligand>
        <name>NAD(+)</name>
        <dbReference type="ChEBI" id="CHEBI:57540"/>
    </ligand>
</feature>
<accession>Q4K399</accession>
<proteinExistence type="inferred from homology"/>
<evidence type="ECO:0000255" key="1">
    <source>
        <dbReference type="HAMAP-Rule" id="MF_00129"/>
    </source>
</evidence>
<protein>
    <recommendedName>
        <fullName evidence="1">tRNA uridine 5-carboxymethylaminomethyl modification enzyme MnmG</fullName>
    </recommendedName>
    <alternativeName>
        <fullName evidence="1">Glucose-inhibited division protein A</fullName>
    </alternativeName>
</protein>
<reference key="1">
    <citation type="journal article" date="2005" name="Nat. Biotechnol.">
        <title>Complete genome sequence of the plant commensal Pseudomonas fluorescens Pf-5.</title>
        <authorList>
            <person name="Paulsen I.T."/>
            <person name="Press C.M."/>
            <person name="Ravel J."/>
            <person name="Kobayashi D.Y."/>
            <person name="Myers G.S.A."/>
            <person name="Mavrodi D.V."/>
            <person name="DeBoy R.T."/>
            <person name="Seshadri R."/>
            <person name="Ren Q."/>
            <person name="Madupu R."/>
            <person name="Dodson R.J."/>
            <person name="Durkin A.S."/>
            <person name="Brinkac L.M."/>
            <person name="Daugherty S.C."/>
            <person name="Sullivan S.A."/>
            <person name="Rosovitz M.J."/>
            <person name="Gwinn M.L."/>
            <person name="Zhou L."/>
            <person name="Schneider D.J."/>
            <person name="Cartinhour S.W."/>
            <person name="Nelson W.C."/>
            <person name="Weidman J."/>
            <person name="Watkins K."/>
            <person name="Tran K."/>
            <person name="Khouri H."/>
            <person name="Pierson E.A."/>
            <person name="Pierson L.S. III"/>
            <person name="Thomashow L.S."/>
            <person name="Loper J.E."/>
        </authorList>
    </citation>
    <scope>NUCLEOTIDE SEQUENCE [LARGE SCALE GENOMIC DNA]</scope>
    <source>
        <strain>ATCC BAA-477 / NRRL B-23932 / Pf-5</strain>
    </source>
</reference>
<dbReference type="EMBL" id="CP000076">
    <property type="protein sequence ID" value="AAY95414.1"/>
    <property type="molecule type" value="Genomic_DNA"/>
</dbReference>
<dbReference type="RefSeq" id="WP_011064390.1">
    <property type="nucleotide sequence ID" value="NC_004129.6"/>
</dbReference>
<dbReference type="SMR" id="Q4K399"/>
<dbReference type="STRING" id="220664.PFL_6226"/>
<dbReference type="KEGG" id="pfl:PFL_6226"/>
<dbReference type="PATRIC" id="fig|220664.5.peg.6357"/>
<dbReference type="eggNOG" id="COG0445">
    <property type="taxonomic scope" value="Bacteria"/>
</dbReference>
<dbReference type="HOGENOM" id="CLU_007831_2_2_6"/>
<dbReference type="Proteomes" id="UP000008540">
    <property type="component" value="Chromosome"/>
</dbReference>
<dbReference type="GO" id="GO:0005829">
    <property type="term" value="C:cytosol"/>
    <property type="evidence" value="ECO:0007669"/>
    <property type="project" value="TreeGrafter"/>
</dbReference>
<dbReference type="GO" id="GO:0050660">
    <property type="term" value="F:flavin adenine dinucleotide binding"/>
    <property type="evidence" value="ECO:0007669"/>
    <property type="project" value="UniProtKB-UniRule"/>
</dbReference>
<dbReference type="GO" id="GO:0030488">
    <property type="term" value="P:tRNA methylation"/>
    <property type="evidence" value="ECO:0007669"/>
    <property type="project" value="TreeGrafter"/>
</dbReference>
<dbReference type="GO" id="GO:0002098">
    <property type="term" value="P:tRNA wobble uridine modification"/>
    <property type="evidence" value="ECO:0007669"/>
    <property type="project" value="InterPro"/>
</dbReference>
<dbReference type="FunFam" id="1.10.10.1800:FF:000001">
    <property type="entry name" value="tRNA uridine 5-carboxymethylaminomethyl modification enzyme MnmG"/>
    <property type="match status" value="1"/>
</dbReference>
<dbReference type="FunFam" id="1.10.150.570:FF:000001">
    <property type="entry name" value="tRNA uridine 5-carboxymethylaminomethyl modification enzyme MnmG"/>
    <property type="match status" value="1"/>
</dbReference>
<dbReference type="FunFam" id="3.50.50.60:FF:000002">
    <property type="entry name" value="tRNA uridine 5-carboxymethylaminomethyl modification enzyme MnmG"/>
    <property type="match status" value="1"/>
</dbReference>
<dbReference type="FunFam" id="3.50.50.60:FF:000010">
    <property type="entry name" value="tRNA uridine 5-carboxymethylaminomethyl modification enzyme MnmG"/>
    <property type="match status" value="1"/>
</dbReference>
<dbReference type="Gene3D" id="3.50.50.60">
    <property type="entry name" value="FAD/NAD(P)-binding domain"/>
    <property type="match status" value="2"/>
</dbReference>
<dbReference type="Gene3D" id="1.10.150.570">
    <property type="entry name" value="GidA associated domain, C-terminal subdomain"/>
    <property type="match status" value="1"/>
</dbReference>
<dbReference type="Gene3D" id="1.10.10.1800">
    <property type="entry name" value="tRNA uridine 5-carboxymethylaminomethyl modification enzyme MnmG/GidA"/>
    <property type="match status" value="1"/>
</dbReference>
<dbReference type="HAMAP" id="MF_00129">
    <property type="entry name" value="MnmG_GidA"/>
    <property type="match status" value="1"/>
</dbReference>
<dbReference type="InterPro" id="IPR036188">
    <property type="entry name" value="FAD/NAD-bd_sf"/>
</dbReference>
<dbReference type="InterPro" id="IPR049312">
    <property type="entry name" value="GIDA_C_N"/>
</dbReference>
<dbReference type="InterPro" id="IPR004416">
    <property type="entry name" value="MnmG"/>
</dbReference>
<dbReference type="InterPro" id="IPR002218">
    <property type="entry name" value="MnmG-rel"/>
</dbReference>
<dbReference type="InterPro" id="IPR020595">
    <property type="entry name" value="MnmG-rel_CS"/>
</dbReference>
<dbReference type="InterPro" id="IPR026904">
    <property type="entry name" value="MnmG_C"/>
</dbReference>
<dbReference type="InterPro" id="IPR047001">
    <property type="entry name" value="MnmG_C_subdom"/>
</dbReference>
<dbReference type="InterPro" id="IPR044920">
    <property type="entry name" value="MnmG_C_subdom_sf"/>
</dbReference>
<dbReference type="InterPro" id="IPR040131">
    <property type="entry name" value="MnmG_N"/>
</dbReference>
<dbReference type="NCBIfam" id="TIGR00136">
    <property type="entry name" value="mnmG_gidA"/>
    <property type="match status" value="1"/>
</dbReference>
<dbReference type="PANTHER" id="PTHR11806">
    <property type="entry name" value="GLUCOSE INHIBITED DIVISION PROTEIN A"/>
    <property type="match status" value="1"/>
</dbReference>
<dbReference type="PANTHER" id="PTHR11806:SF0">
    <property type="entry name" value="PROTEIN MTO1 HOMOLOG, MITOCHONDRIAL"/>
    <property type="match status" value="1"/>
</dbReference>
<dbReference type="Pfam" id="PF01134">
    <property type="entry name" value="GIDA"/>
    <property type="match status" value="1"/>
</dbReference>
<dbReference type="Pfam" id="PF21680">
    <property type="entry name" value="GIDA_C_1st"/>
    <property type="match status" value="1"/>
</dbReference>
<dbReference type="Pfam" id="PF13932">
    <property type="entry name" value="SAM_GIDA_C"/>
    <property type="match status" value="1"/>
</dbReference>
<dbReference type="SMART" id="SM01228">
    <property type="entry name" value="GIDA_assoc_3"/>
    <property type="match status" value="1"/>
</dbReference>
<dbReference type="SUPFAM" id="SSF51905">
    <property type="entry name" value="FAD/NAD(P)-binding domain"/>
    <property type="match status" value="1"/>
</dbReference>
<dbReference type="PROSITE" id="PS01280">
    <property type="entry name" value="GIDA_1"/>
    <property type="match status" value="1"/>
</dbReference>
<dbReference type="PROSITE" id="PS01281">
    <property type="entry name" value="GIDA_2"/>
    <property type="match status" value="1"/>
</dbReference>